<sequence length="188" mass="21345">MTIMSDKWIKDAVIKQSMIRPFAEKQVRVHNKEKIISYGLSSYGYDARVSNEFKIFTNINSTTVDPKNFSEDNLVDREVDECIIPPNSFALGRTIEYFKIPRDVLVICVGKSTYARCGIIVNVTPLEPEWEGHVTLEFSNTTPLPAKIYANEGACQFLFLKSDQICDTSYAERQGKYMKQVGVTLPLT</sequence>
<organism>
    <name type="scientific">Rickettsia typhi (strain ATCC VR-144 / Wilmington)</name>
    <dbReference type="NCBI Taxonomy" id="257363"/>
    <lineage>
        <taxon>Bacteria</taxon>
        <taxon>Pseudomonadati</taxon>
        <taxon>Pseudomonadota</taxon>
        <taxon>Alphaproteobacteria</taxon>
        <taxon>Rickettsiales</taxon>
        <taxon>Rickettsiaceae</taxon>
        <taxon>Rickettsieae</taxon>
        <taxon>Rickettsia</taxon>
        <taxon>typhus group</taxon>
    </lineage>
</organism>
<accession>Q68XU3</accession>
<feature type="chain" id="PRO_0000274886" description="dCTP deaminase">
    <location>
        <begin position="1"/>
        <end position="188"/>
    </location>
</feature>
<feature type="active site" description="Proton donor/acceptor" evidence="1">
    <location>
        <position position="137"/>
    </location>
</feature>
<feature type="binding site" evidence="1">
    <location>
        <begin position="111"/>
        <end position="116"/>
    </location>
    <ligand>
        <name>dCTP</name>
        <dbReference type="ChEBI" id="CHEBI:61481"/>
    </ligand>
</feature>
<feature type="binding site" evidence="1">
    <location>
        <begin position="135"/>
        <end position="137"/>
    </location>
    <ligand>
        <name>dCTP</name>
        <dbReference type="ChEBI" id="CHEBI:61481"/>
    </ligand>
</feature>
<feature type="binding site" evidence="1">
    <location>
        <position position="156"/>
    </location>
    <ligand>
        <name>dCTP</name>
        <dbReference type="ChEBI" id="CHEBI:61481"/>
    </ligand>
</feature>
<feature type="binding site" evidence="1">
    <location>
        <position position="170"/>
    </location>
    <ligand>
        <name>dCTP</name>
        <dbReference type="ChEBI" id="CHEBI:61481"/>
    </ligand>
</feature>
<feature type="binding site" evidence="1">
    <location>
        <position position="179"/>
    </location>
    <ligand>
        <name>dCTP</name>
        <dbReference type="ChEBI" id="CHEBI:61481"/>
    </ligand>
</feature>
<feature type="binding site" evidence="1">
    <location>
        <position position="180"/>
    </location>
    <ligand>
        <name>dCTP</name>
        <dbReference type="ChEBI" id="CHEBI:61481"/>
    </ligand>
</feature>
<comment type="function">
    <text evidence="1">Catalyzes the deamination of dCTP to dUTP.</text>
</comment>
<comment type="catalytic activity">
    <reaction evidence="1">
        <text>dCTP + H2O + H(+) = dUTP + NH4(+)</text>
        <dbReference type="Rhea" id="RHEA:22680"/>
        <dbReference type="ChEBI" id="CHEBI:15377"/>
        <dbReference type="ChEBI" id="CHEBI:15378"/>
        <dbReference type="ChEBI" id="CHEBI:28938"/>
        <dbReference type="ChEBI" id="CHEBI:61481"/>
        <dbReference type="ChEBI" id="CHEBI:61555"/>
        <dbReference type="EC" id="3.5.4.13"/>
    </reaction>
</comment>
<comment type="pathway">
    <text evidence="1">Pyrimidine metabolism; dUMP biosynthesis; dUMP from dCTP (dUTP route): step 1/2.</text>
</comment>
<comment type="subunit">
    <text evidence="1">Homotrimer.</text>
</comment>
<comment type="similarity">
    <text evidence="1">Belongs to the dCTP deaminase family.</text>
</comment>
<keyword id="KW-0378">Hydrolase</keyword>
<keyword id="KW-0546">Nucleotide metabolism</keyword>
<keyword id="KW-0547">Nucleotide-binding</keyword>
<name>DCD_RICTY</name>
<gene>
    <name evidence="1" type="primary">dcd</name>
    <name type="ordered locus">RT0063</name>
</gene>
<evidence type="ECO:0000255" key="1">
    <source>
        <dbReference type="HAMAP-Rule" id="MF_00146"/>
    </source>
</evidence>
<reference key="1">
    <citation type="journal article" date="2004" name="J. Bacteriol.">
        <title>Complete genome sequence of Rickettsia typhi and comparison with sequences of other Rickettsiae.</title>
        <authorList>
            <person name="McLeod M.P."/>
            <person name="Qin X."/>
            <person name="Karpathy S.E."/>
            <person name="Gioia J."/>
            <person name="Highlander S.K."/>
            <person name="Fox G.E."/>
            <person name="McNeill T.Z."/>
            <person name="Jiang H."/>
            <person name="Muzny D."/>
            <person name="Jacob L.S."/>
            <person name="Hawes A.C."/>
            <person name="Sodergren E."/>
            <person name="Gill R."/>
            <person name="Hume J."/>
            <person name="Morgan M."/>
            <person name="Fan G."/>
            <person name="Amin A.G."/>
            <person name="Gibbs R.A."/>
            <person name="Hong C."/>
            <person name="Yu X.-J."/>
            <person name="Walker D.H."/>
            <person name="Weinstock G.M."/>
        </authorList>
    </citation>
    <scope>NUCLEOTIDE SEQUENCE [LARGE SCALE GENOMIC DNA]</scope>
    <source>
        <strain>ATCC VR-144 / Wilmington</strain>
    </source>
</reference>
<protein>
    <recommendedName>
        <fullName evidence="1">dCTP deaminase</fullName>
        <ecNumber evidence="1">3.5.4.13</ecNumber>
    </recommendedName>
    <alternativeName>
        <fullName evidence="1">Deoxycytidine triphosphate deaminase</fullName>
    </alternativeName>
</protein>
<dbReference type="EC" id="3.5.4.13" evidence="1"/>
<dbReference type="EMBL" id="AE017197">
    <property type="protein sequence ID" value="AAU03549.1"/>
    <property type="molecule type" value="Genomic_DNA"/>
</dbReference>
<dbReference type="RefSeq" id="WP_011190536.1">
    <property type="nucleotide sequence ID" value="NC_006142.1"/>
</dbReference>
<dbReference type="SMR" id="Q68XU3"/>
<dbReference type="KEGG" id="rty:RT0063"/>
<dbReference type="eggNOG" id="COG0717">
    <property type="taxonomic scope" value="Bacteria"/>
</dbReference>
<dbReference type="HOGENOM" id="CLU_087476_4_0_5"/>
<dbReference type="OrthoDB" id="9780956at2"/>
<dbReference type="UniPathway" id="UPA00610">
    <property type="reaction ID" value="UER00665"/>
</dbReference>
<dbReference type="Proteomes" id="UP000000604">
    <property type="component" value="Chromosome"/>
</dbReference>
<dbReference type="GO" id="GO:0008829">
    <property type="term" value="F:dCTP deaminase activity"/>
    <property type="evidence" value="ECO:0007669"/>
    <property type="project" value="UniProtKB-UniRule"/>
</dbReference>
<dbReference type="GO" id="GO:0000166">
    <property type="term" value="F:nucleotide binding"/>
    <property type="evidence" value="ECO:0007669"/>
    <property type="project" value="UniProtKB-KW"/>
</dbReference>
<dbReference type="GO" id="GO:0006226">
    <property type="term" value="P:dUMP biosynthetic process"/>
    <property type="evidence" value="ECO:0007669"/>
    <property type="project" value="UniProtKB-UniPathway"/>
</dbReference>
<dbReference type="GO" id="GO:0006229">
    <property type="term" value="P:dUTP biosynthetic process"/>
    <property type="evidence" value="ECO:0007669"/>
    <property type="project" value="UniProtKB-UniRule"/>
</dbReference>
<dbReference type="CDD" id="cd07557">
    <property type="entry name" value="trimeric_dUTPase"/>
    <property type="match status" value="1"/>
</dbReference>
<dbReference type="FunFam" id="2.70.40.10:FF:000001">
    <property type="entry name" value="dCTP deaminase"/>
    <property type="match status" value="1"/>
</dbReference>
<dbReference type="Gene3D" id="2.70.40.10">
    <property type="match status" value="1"/>
</dbReference>
<dbReference type="HAMAP" id="MF_00146">
    <property type="entry name" value="dCTP_deaminase"/>
    <property type="match status" value="1"/>
</dbReference>
<dbReference type="InterPro" id="IPR011962">
    <property type="entry name" value="dCTP_deaminase"/>
</dbReference>
<dbReference type="InterPro" id="IPR036157">
    <property type="entry name" value="dUTPase-like_sf"/>
</dbReference>
<dbReference type="InterPro" id="IPR033704">
    <property type="entry name" value="dUTPase_trimeric"/>
</dbReference>
<dbReference type="NCBIfam" id="TIGR02274">
    <property type="entry name" value="dCTP_deam"/>
    <property type="match status" value="1"/>
</dbReference>
<dbReference type="PANTHER" id="PTHR42680">
    <property type="entry name" value="DCTP DEAMINASE"/>
    <property type="match status" value="1"/>
</dbReference>
<dbReference type="PANTHER" id="PTHR42680:SF3">
    <property type="entry name" value="DCTP DEAMINASE"/>
    <property type="match status" value="1"/>
</dbReference>
<dbReference type="Pfam" id="PF22769">
    <property type="entry name" value="DCD"/>
    <property type="match status" value="1"/>
</dbReference>
<dbReference type="SUPFAM" id="SSF51283">
    <property type="entry name" value="dUTPase-like"/>
    <property type="match status" value="1"/>
</dbReference>
<proteinExistence type="inferred from homology"/>